<feature type="chain" id="PRO_0000419696" description="Kinesin-like protein KIN-12B">
    <location>
        <begin position="1"/>
        <end position="1313"/>
    </location>
</feature>
<feature type="domain" description="Kinesin motor" evidence="3">
    <location>
        <begin position="96"/>
        <end position="431"/>
    </location>
</feature>
<feature type="region of interest" description="Disordered" evidence="4">
    <location>
        <begin position="1"/>
        <end position="74"/>
    </location>
</feature>
<feature type="region of interest" description="Microtubules-binding" evidence="1">
    <location>
        <begin position="298"/>
        <end position="302"/>
    </location>
</feature>
<feature type="region of interest" description="Microtubules-binding" evidence="1">
    <location>
        <begin position="331"/>
        <end position="337"/>
    </location>
</feature>
<feature type="region of interest" description="Microtubules-binding" evidence="1">
    <location>
        <begin position="380"/>
        <end position="384"/>
    </location>
</feature>
<feature type="region of interest" description="Neck" evidence="1">
    <location>
        <begin position="429"/>
        <end position="467"/>
    </location>
</feature>
<feature type="region of interest" description="Disordered" evidence="4">
    <location>
        <begin position="685"/>
        <end position="709"/>
    </location>
</feature>
<feature type="coiled-coil region" evidence="2">
    <location>
        <begin position="932"/>
        <end position="1003"/>
    </location>
</feature>
<feature type="coiled-coil region" evidence="2">
    <location>
        <begin position="1062"/>
        <end position="1130"/>
    </location>
</feature>
<feature type="coiled-coil region" evidence="2">
    <location>
        <begin position="1167"/>
        <end position="1241"/>
    </location>
</feature>
<feature type="compositionally biased region" description="Polar residues" evidence="4">
    <location>
        <begin position="17"/>
        <end position="26"/>
    </location>
</feature>
<feature type="compositionally biased region" description="Polar residues" evidence="4">
    <location>
        <begin position="699"/>
        <end position="708"/>
    </location>
</feature>
<feature type="binding site" evidence="3">
    <location>
        <begin position="170"/>
        <end position="177"/>
    </location>
    <ligand>
        <name>ATP</name>
        <dbReference type="ChEBI" id="CHEBI:30616"/>
    </ligand>
</feature>
<proteinExistence type="evidence at protein level"/>
<dbReference type="EMBL" id="AF540489">
    <property type="protein sequence ID" value="AAN16470.1"/>
    <property type="molecule type" value="mRNA"/>
</dbReference>
<dbReference type="EMBL" id="AF540490">
    <property type="protein sequence ID" value="AAN16471.1"/>
    <property type="molecule type" value="Genomic_DNA"/>
</dbReference>
<dbReference type="EMBL" id="AB023036">
    <property type="protein sequence ID" value="BAB02786.1"/>
    <property type="status" value="ALT_SEQ"/>
    <property type="molecule type" value="Genomic_DNA"/>
</dbReference>
<dbReference type="EMBL" id="CP002686">
    <property type="protein sequence ID" value="AEE76798.1"/>
    <property type="molecule type" value="Genomic_DNA"/>
</dbReference>
<dbReference type="EMBL" id="AY124006">
    <property type="protein sequence ID" value="AAM74514.1"/>
    <property type="molecule type" value="mRNA"/>
</dbReference>
<dbReference type="RefSeq" id="NP_189009.2">
    <molecule id="Q8L7Y8-1"/>
    <property type="nucleotide sequence ID" value="NM_113271.4"/>
</dbReference>
<dbReference type="SMR" id="Q8L7Y8"/>
<dbReference type="BioGRID" id="7279">
    <property type="interactions" value="1"/>
</dbReference>
<dbReference type="FunCoup" id="Q8L7Y8">
    <property type="interactions" value="284"/>
</dbReference>
<dbReference type="IntAct" id="Q8L7Y8">
    <property type="interactions" value="2"/>
</dbReference>
<dbReference type="STRING" id="3702.Q8L7Y8"/>
<dbReference type="iPTMnet" id="Q8L7Y8"/>
<dbReference type="PaxDb" id="3702-AT3G23670.1"/>
<dbReference type="ProteomicsDB" id="237093">
    <molecule id="Q8L7Y8-1"/>
</dbReference>
<dbReference type="EnsemblPlants" id="AT3G23670.1">
    <molecule id="Q8L7Y8-1"/>
    <property type="protein sequence ID" value="AT3G23670.1"/>
    <property type="gene ID" value="AT3G23670"/>
</dbReference>
<dbReference type="GeneID" id="821947"/>
<dbReference type="Gramene" id="AT3G23670.1">
    <molecule id="Q8L7Y8-1"/>
    <property type="protein sequence ID" value="AT3G23670.1"/>
    <property type="gene ID" value="AT3G23670"/>
</dbReference>
<dbReference type="KEGG" id="ath:AT3G23670"/>
<dbReference type="Araport" id="AT3G23670"/>
<dbReference type="TAIR" id="AT3G23670">
    <property type="gene designation" value="KINESIN-12B"/>
</dbReference>
<dbReference type="eggNOG" id="KOG4280">
    <property type="taxonomic scope" value="Eukaryota"/>
</dbReference>
<dbReference type="InParanoid" id="Q8L7Y8"/>
<dbReference type="OMA" id="CKNRMQL"/>
<dbReference type="PhylomeDB" id="Q8L7Y8"/>
<dbReference type="PRO" id="PR:Q8L7Y8"/>
<dbReference type="Proteomes" id="UP000006548">
    <property type="component" value="Chromosome 3"/>
</dbReference>
<dbReference type="ExpressionAtlas" id="Q8L7Y8">
    <property type="expression patterns" value="baseline and differential"/>
</dbReference>
<dbReference type="GO" id="GO:0005874">
    <property type="term" value="C:microtubule"/>
    <property type="evidence" value="ECO:0007669"/>
    <property type="project" value="UniProtKB-KW"/>
</dbReference>
<dbReference type="GO" id="GO:0009524">
    <property type="term" value="C:phragmoplast"/>
    <property type="evidence" value="ECO:0000314"/>
    <property type="project" value="UniProtKB"/>
</dbReference>
<dbReference type="GO" id="GO:0005524">
    <property type="term" value="F:ATP binding"/>
    <property type="evidence" value="ECO:0007669"/>
    <property type="project" value="UniProtKB-KW"/>
</dbReference>
<dbReference type="GO" id="GO:0008017">
    <property type="term" value="F:microtubule binding"/>
    <property type="evidence" value="ECO:0007669"/>
    <property type="project" value="InterPro"/>
</dbReference>
<dbReference type="GO" id="GO:0003777">
    <property type="term" value="F:microtubule motor activity"/>
    <property type="evidence" value="ECO:0007669"/>
    <property type="project" value="InterPro"/>
</dbReference>
<dbReference type="GO" id="GO:0007112">
    <property type="term" value="P:male meiosis cytokinesis"/>
    <property type="evidence" value="ECO:0000316"/>
    <property type="project" value="TAIR"/>
</dbReference>
<dbReference type="GO" id="GO:0055046">
    <property type="term" value="P:microgametogenesis"/>
    <property type="evidence" value="ECO:0000315"/>
    <property type="project" value="TAIR"/>
</dbReference>
<dbReference type="GO" id="GO:0007018">
    <property type="term" value="P:microtubule-based movement"/>
    <property type="evidence" value="ECO:0007669"/>
    <property type="project" value="InterPro"/>
</dbReference>
<dbReference type="GO" id="GO:0080175">
    <property type="term" value="P:phragmoplast microtubule organization"/>
    <property type="evidence" value="ECO:0000315"/>
    <property type="project" value="UniProtKB"/>
</dbReference>
<dbReference type="FunFam" id="3.40.850.10:FF:000052">
    <property type="entry name" value="Kinesin-like protein KIN-12F"/>
    <property type="match status" value="1"/>
</dbReference>
<dbReference type="Gene3D" id="3.40.850.10">
    <property type="entry name" value="Kinesin motor domain"/>
    <property type="match status" value="1"/>
</dbReference>
<dbReference type="InterPro" id="IPR044986">
    <property type="entry name" value="KIF15/KIN-12"/>
</dbReference>
<dbReference type="InterPro" id="IPR019821">
    <property type="entry name" value="Kinesin_motor_CS"/>
</dbReference>
<dbReference type="InterPro" id="IPR001752">
    <property type="entry name" value="Kinesin_motor_dom"/>
</dbReference>
<dbReference type="InterPro" id="IPR036961">
    <property type="entry name" value="Kinesin_motor_dom_sf"/>
</dbReference>
<dbReference type="InterPro" id="IPR027417">
    <property type="entry name" value="P-loop_NTPase"/>
</dbReference>
<dbReference type="PANTHER" id="PTHR37739:SF16">
    <property type="entry name" value="KINESIN-LIKE PROTEIN"/>
    <property type="match status" value="1"/>
</dbReference>
<dbReference type="PANTHER" id="PTHR37739">
    <property type="entry name" value="KINESIN-LIKE PROTEIN KIN-12D"/>
    <property type="match status" value="1"/>
</dbReference>
<dbReference type="Pfam" id="PF00225">
    <property type="entry name" value="Kinesin"/>
    <property type="match status" value="1"/>
</dbReference>
<dbReference type="PRINTS" id="PR00380">
    <property type="entry name" value="KINESINHEAVY"/>
</dbReference>
<dbReference type="SMART" id="SM00129">
    <property type="entry name" value="KISc"/>
    <property type="match status" value="1"/>
</dbReference>
<dbReference type="SUPFAM" id="SSF52540">
    <property type="entry name" value="P-loop containing nucleoside triphosphate hydrolases"/>
    <property type="match status" value="1"/>
</dbReference>
<dbReference type="PROSITE" id="PS00411">
    <property type="entry name" value="KINESIN_MOTOR_1"/>
    <property type="match status" value="1"/>
</dbReference>
<dbReference type="PROSITE" id="PS50067">
    <property type="entry name" value="KINESIN_MOTOR_2"/>
    <property type="match status" value="1"/>
</dbReference>
<gene>
    <name evidence="10" type="primary">KIN12B</name>
    <name evidence="12" type="synonym">PAKRP1L</name>
    <name evidence="11" type="ordered locus">At3g23670</name>
    <name evidence="13" type="ORF">MDB19.16</name>
</gene>
<evidence type="ECO:0000250" key="1">
    <source>
        <dbReference type="UniProtKB" id="Q9LDN0"/>
    </source>
</evidence>
<evidence type="ECO:0000255" key="2"/>
<evidence type="ECO:0000255" key="3">
    <source>
        <dbReference type="PROSITE-ProRule" id="PRU00283"/>
    </source>
</evidence>
<evidence type="ECO:0000256" key="4">
    <source>
        <dbReference type="SAM" id="MobiDB-lite"/>
    </source>
</evidence>
<evidence type="ECO:0000269" key="5">
    <source>
    </source>
</evidence>
<evidence type="ECO:0000269" key="6">
    <source>
    </source>
</evidence>
<evidence type="ECO:0000269" key="7">
    <source>
    </source>
</evidence>
<evidence type="ECO:0000303" key="8">
    <source>
    </source>
</evidence>
<evidence type="ECO:0000303" key="9">
    <source>
    </source>
</evidence>
<evidence type="ECO:0000305" key="10"/>
<evidence type="ECO:0000312" key="11">
    <source>
        <dbReference type="Araport" id="AT3G23670"/>
    </source>
</evidence>
<evidence type="ECO:0000312" key="12">
    <source>
        <dbReference type="EMBL" id="AAN16470.1"/>
    </source>
</evidence>
<evidence type="ECO:0000312" key="13">
    <source>
        <dbReference type="EMBL" id="BAB02786.1"/>
    </source>
</evidence>
<accession>Q8L7Y8</accession>
<accession>Q9LUG0</accession>
<reference key="1">
    <citation type="journal article" date="2004" name="Planta">
        <title>Localization of two homologous Arabidopsis kinesin-related proteins in the phragmoplast.</title>
        <authorList>
            <person name="Pan R."/>
            <person name="Lee Y.R."/>
            <person name="Liu B."/>
        </authorList>
    </citation>
    <scope>NUCLEOTIDE SEQUENCE [GENOMIC DNA / MRNA]</scope>
    <scope>SUBCELLULAR LOCATION</scope>
    <scope>SUBUNIT</scope>
    <scope>DISRUPTION PHENOTYPE</scope>
    <source>
        <strain>cv. Columbia</strain>
    </source>
</reference>
<reference key="2">
    <citation type="journal article" date="2000" name="DNA Res.">
        <title>Structural analysis of Arabidopsis thaliana chromosome 3. I. Sequence features of the regions of 4,504,864 bp covered by sixty P1 and TAC clones.</title>
        <authorList>
            <person name="Sato S."/>
            <person name="Nakamura Y."/>
            <person name="Kaneko T."/>
            <person name="Katoh T."/>
            <person name="Asamizu E."/>
            <person name="Tabata S."/>
        </authorList>
    </citation>
    <scope>NUCLEOTIDE SEQUENCE [LARGE SCALE GENOMIC DNA]</scope>
    <source>
        <strain>cv. Columbia</strain>
    </source>
</reference>
<reference key="3">
    <citation type="journal article" date="2017" name="Plant J.">
        <title>Araport11: a complete reannotation of the Arabidopsis thaliana reference genome.</title>
        <authorList>
            <person name="Cheng C.Y."/>
            <person name="Krishnakumar V."/>
            <person name="Chan A.P."/>
            <person name="Thibaud-Nissen F."/>
            <person name="Schobel S."/>
            <person name="Town C.D."/>
        </authorList>
    </citation>
    <scope>GENOME REANNOTATION</scope>
    <source>
        <strain>cv. Columbia</strain>
    </source>
</reference>
<reference key="4">
    <citation type="journal article" date="2003" name="Science">
        <title>Empirical analysis of transcriptional activity in the Arabidopsis genome.</title>
        <authorList>
            <person name="Yamada K."/>
            <person name="Lim J."/>
            <person name="Dale J.M."/>
            <person name="Chen H."/>
            <person name="Shinn P."/>
            <person name="Palm C.J."/>
            <person name="Southwick A.M."/>
            <person name="Wu H.C."/>
            <person name="Kim C.J."/>
            <person name="Nguyen M."/>
            <person name="Pham P.K."/>
            <person name="Cheuk R.F."/>
            <person name="Karlin-Newmann G."/>
            <person name="Liu S.X."/>
            <person name="Lam B."/>
            <person name="Sakano H."/>
            <person name="Wu T."/>
            <person name="Yu G."/>
            <person name="Miranda M."/>
            <person name="Quach H.L."/>
            <person name="Tripp M."/>
            <person name="Chang C.H."/>
            <person name="Lee J.M."/>
            <person name="Toriumi M.J."/>
            <person name="Chan M.M."/>
            <person name="Tang C.C."/>
            <person name="Onodera C.S."/>
            <person name="Deng J.M."/>
            <person name="Akiyama K."/>
            <person name="Ansari Y."/>
            <person name="Arakawa T."/>
            <person name="Banh J."/>
            <person name="Banno F."/>
            <person name="Bowser L."/>
            <person name="Brooks S.Y."/>
            <person name="Carninci P."/>
            <person name="Chao Q."/>
            <person name="Choy N."/>
            <person name="Enju A."/>
            <person name="Goldsmith A.D."/>
            <person name="Gurjal M."/>
            <person name="Hansen N.F."/>
            <person name="Hayashizaki Y."/>
            <person name="Johnson-Hopson C."/>
            <person name="Hsuan V.W."/>
            <person name="Iida K."/>
            <person name="Karnes M."/>
            <person name="Khan S."/>
            <person name="Koesema E."/>
            <person name="Ishida J."/>
            <person name="Jiang P.X."/>
            <person name="Jones T."/>
            <person name="Kawai J."/>
            <person name="Kamiya A."/>
            <person name="Meyers C."/>
            <person name="Nakajima M."/>
            <person name="Narusaka M."/>
            <person name="Seki M."/>
            <person name="Sakurai T."/>
            <person name="Satou M."/>
            <person name="Tamse R."/>
            <person name="Vaysberg M."/>
            <person name="Wallender E.K."/>
            <person name="Wong C."/>
            <person name="Yamamura Y."/>
            <person name="Yuan S."/>
            <person name="Shinozaki K."/>
            <person name="Davis R.W."/>
            <person name="Theologis A."/>
            <person name="Ecker J.R."/>
        </authorList>
    </citation>
    <scope>NUCLEOTIDE SEQUENCE [LARGE SCALE MRNA]</scope>
    <source>
        <strain>cv. Columbia</strain>
    </source>
</reference>
<reference key="5">
    <citation type="journal article" date="2001" name="BMC Genomics">
        <title>Kinesins in the Arabidopsis genome: a comparative analysis among eukaryotes.</title>
        <authorList>
            <person name="Reddy A.S."/>
            <person name="Day I.S."/>
        </authorList>
    </citation>
    <scope>GENE FAMILY</scope>
</reference>
<reference key="6">
    <citation type="journal article" date="2006" name="BMC Genomics">
        <title>Comprehensive comparative analysis of kinesins in photosynthetic eukaryotes.</title>
        <authorList>
            <person name="Richardson D.N."/>
            <person name="Simmons M.P."/>
            <person name="Reddy A.S."/>
        </authorList>
    </citation>
    <scope>GENE FAMILY</scope>
    <scope>NOMENCLATURE</scope>
</reference>
<reference key="7">
    <citation type="journal article" date="2007" name="Plant Cell">
        <title>Two Arabidopsis phragmoplast-associated kinesins play a critical role in cytokinesis during male gametogenesis.</title>
        <authorList>
            <person name="Lee Y.R."/>
            <person name="Li Y."/>
            <person name="Liu B."/>
        </authorList>
    </citation>
    <scope>FUNCTION</scope>
    <scope>DISRUPTION PHENOTYPE</scope>
</reference>
<reference key="8">
    <citation type="journal article" date="2012" name="Plant J.">
        <title>Arabidopsis Fused kinase and the Kinesin-12 subfamily constitute a signalling module required for phragmoplast expansion.</title>
        <authorList>
            <person name="Oh S.A."/>
            <person name="Allen T."/>
            <person name="Kim G.J."/>
            <person name="Sidorova A."/>
            <person name="Borg M."/>
            <person name="Park S.K."/>
            <person name="Twell D."/>
        </authorList>
    </citation>
    <scope>INTERACTION WITH TIO</scope>
</reference>
<reference key="9">
    <citation type="journal article" date="2012" name="Protoplasma">
        <title>Functions of the Arabidopsis kinesin superfamily of microtubule-based motor proteins.</title>
        <authorList>
            <person name="Zhu C."/>
            <person name="Dixit R."/>
        </authorList>
    </citation>
    <scope>REVIEW</scope>
</reference>
<organism>
    <name type="scientific">Arabidopsis thaliana</name>
    <name type="common">Mouse-ear cress</name>
    <dbReference type="NCBI Taxonomy" id="3702"/>
    <lineage>
        <taxon>Eukaryota</taxon>
        <taxon>Viridiplantae</taxon>
        <taxon>Streptophyta</taxon>
        <taxon>Embryophyta</taxon>
        <taxon>Tracheophyta</taxon>
        <taxon>Spermatophyta</taxon>
        <taxon>Magnoliopsida</taxon>
        <taxon>eudicotyledons</taxon>
        <taxon>Gunneridae</taxon>
        <taxon>Pentapetalae</taxon>
        <taxon>rosids</taxon>
        <taxon>malvids</taxon>
        <taxon>Brassicales</taxon>
        <taxon>Brassicaceae</taxon>
        <taxon>Camelineae</taxon>
        <taxon>Arabidopsis</taxon>
    </lineage>
</organism>
<comment type="function">
    <text evidence="6">Plus-end directed kinesin-like motor enzyme that plays a critical role in the organization of phragmoplast microtubules during cytokinesis. Constitutes a signaling module in association with serine/threonine-protein kinase TIO that is required to support phragmoplast expansion and cell-plate growth in plant cells.</text>
</comment>
<comment type="subunit">
    <text evidence="5 7">Homodimer and heterodimer with KIN12A. Interacts with TIO.</text>
</comment>
<comment type="interaction">
    <interactant intactId="EBI-6280461">
        <id>Q8L7Y8</id>
    </interactant>
    <interactant intactId="EBI-6280428">
        <id>Q9LDN0</id>
        <label>KIN12A</label>
    </interactant>
    <organismsDiffer>false</organismsDiffer>
    <experiments>2</experiments>
</comment>
<comment type="subcellular location">
    <subcellularLocation>
        <location evidence="5">Cytoplasm</location>
        <location evidence="5">Cytoskeleton</location>
        <location evidence="5">Phragmoplast</location>
    </subcellularLocation>
    <text>Localized to the midline of the nascent phragmoplast (late anaphase) and remains associated with the expanding phragmoplast ring.</text>
</comment>
<comment type="alternative products">
    <event type="alternative splicing"/>
    <isoform>
        <id>Q8L7Y8-1</id>
        <name>1</name>
        <sequence type="displayed"/>
    </isoform>
    <text>A number of isoforms are produced. According to EST sequences.</text>
</comment>
<comment type="disruption phenotype">
    <text evidence="5 6">No visible phenotype. Kin12a and kin12b double mutant display defective pollen grains leading to the production of fewer seeds.</text>
</comment>
<comment type="similarity">
    <text evidence="9">Belongs to the TRAFAC class myosin-kinesin ATPase superfamily. Kinesin family. KIN-12 subfamily.</text>
</comment>
<comment type="sequence caution" evidence="10">
    <conflict type="erroneous gene model prediction">
        <sequence resource="EMBL-CDS" id="BAB02786"/>
    </conflict>
</comment>
<name>KN12B_ARATH</name>
<keyword id="KW-0025">Alternative splicing</keyword>
<keyword id="KW-0067">ATP-binding</keyword>
<keyword id="KW-0175">Coiled coil</keyword>
<keyword id="KW-0963">Cytoplasm</keyword>
<keyword id="KW-0206">Cytoskeleton</keyword>
<keyword id="KW-0493">Microtubule</keyword>
<keyword id="KW-0505">Motor protein</keyword>
<keyword id="KW-0547">Nucleotide-binding</keyword>
<keyword id="KW-1185">Reference proteome</keyword>
<sequence>MKHFMMPRNAILRDIGESQSPNPSLTKSKSQRKIKSSKENAPPPDLNSLIPDHRSSPAKLKSPLPPRPPSSNPLKRKLIAEATADNGVAIGVSDSGVKVIVRMKPPSKGEEEEMIVKKISNDALTINEQTFTFDSIADPESTQDEIFQLVGAPLVENCLAGFNSSVFAYGQTGSGKTYTMWGPANGLLEEHLSGDQRGLTPRVFELLFARLSEEQAKHAERQLKYQCRCSFLEIYNEQITDLLDPSLKNLMIREDVKSGVYVENLTEEYVKNLKDLSKLLVKGLANRRTGATSVNAESSRSHCVFTCVVESHCKSVADGLSSFKTSRINLVDLAGSERQKLTGAAGDRLKEAGNINRSLSQLGNLINILAEISQTGKQRHIPYRDSRLTFLLQESLGGNAKLAMVCAVSPSQSCRSETFSTLRFAQRAKAIQNKAIVNEVMQDDVNFLREVIRQLRDELQRVKDDKGNNPTNPNAAYTTSWNARRSLSLLRSFGLGHPKSLPNGDDDGDTEMEIDEEAVERLCAQMGLSPPAEDNNQEMSRVEKINSSLQTVVLKDESYNNSHLKSSEATDVNMEDACCQTENNGSETDNALTVAETMDDGSSVQPDSITNSLHSCISDTNQGNSPSKAENIPSCQDLVIEADVSAIVSVADTSNNTEQVSVNPVSPCLSVAPVSVSPVLIPPTESASPKIRNSRKSLRTTSMSTASQKDIERANQLTPEVVEPSPAMSTEVLNLYSALSTKKSEAFPVPTRQLAASLHRGMKLLDSYRQSTALRRSTFRLSYKALECKPSTVLSKADVGVQTYPQADEIAEDNSKEVLCSRCKCRAECDAQEISDTSNLQLVPIDNSEGSEKSNFQVPKAVEKVLAGSIRREMAMEEFCTKQASEISQLNRLVQQYKHERECNAIIGQTREDKIVRLESLMDGVLSKDDFLDEEFASLMHEHKLLKDMYENHPEVLQTRIELKRVQEELESFKNFYGDMGEREVLLEEIHDLKAQLQCYTDSSLTSARRRGSLLKLTYACDPNQAPQLNTIPESVDEGPEKTLEQERLRWTEAESNWISLAEELRTELDTNRLLMEKQKRELDTEKRCAEELTEAMQMAMQGHARMIEQYADLEEKHIQLLARHRRIREGIDDVKKAAARAGVKGAESRFINALAAEISALKVQREKEVRYFRDENKSLQSQLRDTAEAVQAAGELLVRFKEAEEGLTFAQKRAMDAEYEASEAYKKVDKLKRKYETEISTVNQQHNAEPQNPIESLQASCNDDAMAKYDEPSASDGDNQWREEFQPFYKKDEELSKLAEPSWFSGYDRCNI</sequence>
<protein>
    <recommendedName>
        <fullName evidence="10">Kinesin-like protein KIN-12B</fullName>
    </recommendedName>
    <alternativeName>
        <fullName evidence="8">Phragmoplast-associated kinesin-related protein 1-like protein</fullName>
        <shortName evidence="8">AtPAKRP1L</shortName>
    </alternativeName>
</protein>